<comment type="function">
    <text evidence="1">O-methyltransferase that catalyzes the 2 O-methylation steps in the ubiquinone biosynthetic pathway.</text>
</comment>
<comment type="catalytic activity">
    <reaction evidence="1">
        <text>a 3-demethylubiquinol + S-adenosyl-L-methionine = a ubiquinol + S-adenosyl-L-homocysteine + H(+)</text>
        <dbReference type="Rhea" id="RHEA:44380"/>
        <dbReference type="Rhea" id="RHEA-COMP:9566"/>
        <dbReference type="Rhea" id="RHEA-COMP:10914"/>
        <dbReference type="ChEBI" id="CHEBI:15378"/>
        <dbReference type="ChEBI" id="CHEBI:17976"/>
        <dbReference type="ChEBI" id="CHEBI:57856"/>
        <dbReference type="ChEBI" id="CHEBI:59789"/>
        <dbReference type="ChEBI" id="CHEBI:84422"/>
        <dbReference type="EC" id="2.1.1.64"/>
    </reaction>
</comment>
<comment type="catalytic activity">
    <reaction evidence="1">
        <text>a 3-(all-trans-polyprenyl)benzene-1,2-diol + S-adenosyl-L-methionine = a 2-methoxy-6-(all-trans-polyprenyl)phenol + S-adenosyl-L-homocysteine + H(+)</text>
        <dbReference type="Rhea" id="RHEA:31411"/>
        <dbReference type="Rhea" id="RHEA-COMP:9550"/>
        <dbReference type="Rhea" id="RHEA-COMP:9551"/>
        <dbReference type="ChEBI" id="CHEBI:15378"/>
        <dbReference type="ChEBI" id="CHEBI:57856"/>
        <dbReference type="ChEBI" id="CHEBI:59789"/>
        <dbReference type="ChEBI" id="CHEBI:62729"/>
        <dbReference type="ChEBI" id="CHEBI:62731"/>
        <dbReference type="EC" id="2.1.1.222"/>
    </reaction>
</comment>
<comment type="pathway">
    <text evidence="1">Cofactor biosynthesis; ubiquinone biosynthesis.</text>
</comment>
<comment type="similarity">
    <text evidence="1">Belongs to the methyltransferase superfamily. UbiG/COQ3 family.</text>
</comment>
<organism>
    <name type="scientific">Pseudomonas paraeruginosa (strain DSM 24068 / PA7)</name>
    <name type="common">Pseudomonas aeruginosa (strain PA7)</name>
    <dbReference type="NCBI Taxonomy" id="381754"/>
    <lineage>
        <taxon>Bacteria</taxon>
        <taxon>Pseudomonadati</taxon>
        <taxon>Pseudomonadota</taxon>
        <taxon>Gammaproteobacteria</taxon>
        <taxon>Pseudomonadales</taxon>
        <taxon>Pseudomonadaceae</taxon>
        <taxon>Pseudomonas</taxon>
        <taxon>Pseudomonas paraeruginosa</taxon>
    </lineage>
</organism>
<name>UBIG_PSEP7</name>
<sequence length="232" mass="25805">MSNVDHAEIAKFEALAHRWWDRESEFKPLHDINPLRVNWIDERAGLAGKTVLDVGCGGGILSEAMAQRGASVTGIDMGEAPLAVARLHQLESGVAVDYRQITAEQMAEEMPGQFDVVTCLEMLEHVPDPASVIRACHRLVKPGGQVFLSTINRNPKAYLFAVIGAEYILQLLPRGTHDFRKFIRPSELGAWSRDAGLEVKDIIGLTYNPLTKHYKLANDVDVNYMVQTQREA</sequence>
<protein>
    <recommendedName>
        <fullName evidence="1">Ubiquinone biosynthesis O-methyltransferase</fullName>
    </recommendedName>
    <alternativeName>
        <fullName evidence="1">2-polyprenyl-6-hydroxyphenol methylase</fullName>
        <ecNumber evidence="1">2.1.1.222</ecNumber>
    </alternativeName>
    <alternativeName>
        <fullName evidence="1">3-demethylubiquinone 3-O-methyltransferase</fullName>
        <ecNumber evidence="1">2.1.1.64</ecNumber>
    </alternativeName>
</protein>
<keyword id="KW-0489">Methyltransferase</keyword>
<keyword id="KW-0949">S-adenosyl-L-methionine</keyword>
<keyword id="KW-0808">Transferase</keyword>
<keyword id="KW-0831">Ubiquinone biosynthesis</keyword>
<dbReference type="EC" id="2.1.1.222" evidence="1"/>
<dbReference type="EC" id="2.1.1.64" evidence="1"/>
<dbReference type="EMBL" id="CP000744">
    <property type="protein sequence ID" value="ABR86621.1"/>
    <property type="molecule type" value="Genomic_DNA"/>
</dbReference>
<dbReference type="RefSeq" id="WP_003151408.1">
    <property type="nucleotide sequence ID" value="NC_009656.1"/>
</dbReference>
<dbReference type="SMR" id="A6V2Q4"/>
<dbReference type="KEGG" id="pap:PSPA7_1958"/>
<dbReference type="HOGENOM" id="CLU_042432_5_0_6"/>
<dbReference type="UniPathway" id="UPA00232"/>
<dbReference type="Proteomes" id="UP000001582">
    <property type="component" value="Chromosome"/>
</dbReference>
<dbReference type="GO" id="GO:0102208">
    <property type="term" value="F:2-polyprenyl-6-hydroxyphenol methylase activity"/>
    <property type="evidence" value="ECO:0007669"/>
    <property type="project" value="UniProtKB-EC"/>
</dbReference>
<dbReference type="GO" id="GO:0061542">
    <property type="term" value="F:3-demethylubiquinol 3-O-methyltransferase activity"/>
    <property type="evidence" value="ECO:0007669"/>
    <property type="project" value="UniProtKB-UniRule"/>
</dbReference>
<dbReference type="GO" id="GO:0010420">
    <property type="term" value="F:polyprenyldihydroxybenzoate methyltransferase activity"/>
    <property type="evidence" value="ECO:0007669"/>
    <property type="project" value="InterPro"/>
</dbReference>
<dbReference type="GO" id="GO:0032259">
    <property type="term" value="P:methylation"/>
    <property type="evidence" value="ECO:0007669"/>
    <property type="project" value="UniProtKB-KW"/>
</dbReference>
<dbReference type="CDD" id="cd02440">
    <property type="entry name" value="AdoMet_MTases"/>
    <property type="match status" value="1"/>
</dbReference>
<dbReference type="FunFam" id="3.40.50.150:FF:000028">
    <property type="entry name" value="Ubiquinone biosynthesis O-methyltransferase"/>
    <property type="match status" value="1"/>
</dbReference>
<dbReference type="Gene3D" id="3.40.50.150">
    <property type="entry name" value="Vaccinia Virus protein VP39"/>
    <property type="match status" value="1"/>
</dbReference>
<dbReference type="HAMAP" id="MF_00472">
    <property type="entry name" value="UbiG"/>
    <property type="match status" value="1"/>
</dbReference>
<dbReference type="InterPro" id="IPR029063">
    <property type="entry name" value="SAM-dependent_MTases_sf"/>
</dbReference>
<dbReference type="InterPro" id="IPR010233">
    <property type="entry name" value="UbiG_MeTrfase"/>
</dbReference>
<dbReference type="NCBIfam" id="TIGR01983">
    <property type="entry name" value="UbiG"/>
    <property type="match status" value="1"/>
</dbReference>
<dbReference type="PANTHER" id="PTHR43464">
    <property type="entry name" value="METHYLTRANSFERASE"/>
    <property type="match status" value="1"/>
</dbReference>
<dbReference type="PANTHER" id="PTHR43464:SF19">
    <property type="entry name" value="UBIQUINONE BIOSYNTHESIS O-METHYLTRANSFERASE, MITOCHONDRIAL"/>
    <property type="match status" value="1"/>
</dbReference>
<dbReference type="Pfam" id="PF13489">
    <property type="entry name" value="Methyltransf_23"/>
    <property type="match status" value="1"/>
</dbReference>
<dbReference type="SUPFAM" id="SSF53335">
    <property type="entry name" value="S-adenosyl-L-methionine-dependent methyltransferases"/>
    <property type="match status" value="1"/>
</dbReference>
<reference key="1">
    <citation type="submission" date="2007-06" db="EMBL/GenBank/DDBJ databases">
        <authorList>
            <person name="Dodson R.J."/>
            <person name="Harkins D."/>
            <person name="Paulsen I.T."/>
        </authorList>
    </citation>
    <scope>NUCLEOTIDE SEQUENCE [LARGE SCALE GENOMIC DNA]</scope>
    <source>
        <strain>DSM 24068 / PA7</strain>
    </source>
</reference>
<evidence type="ECO:0000255" key="1">
    <source>
        <dbReference type="HAMAP-Rule" id="MF_00472"/>
    </source>
</evidence>
<proteinExistence type="inferred from homology"/>
<feature type="chain" id="PRO_1000013906" description="Ubiquinone biosynthesis O-methyltransferase">
    <location>
        <begin position="1"/>
        <end position="232"/>
    </location>
</feature>
<feature type="binding site" evidence="1">
    <location>
        <position position="36"/>
    </location>
    <ligand>
        <name>S-adenosyl-L-methionine</name>
        <dbReference type="ChEBI" id="CHEBI:59789"/>
    </ligand>
</feature>
<feature type="binding site" evidence="1">
    <location>
        <position position="55"/>
    </location>
    <ligand>
        <name>S-adenosyl-L-methionine</name>
        <dbReference type="ChEBI" id="CHEBI:59789"/>
    </ligand>
</feature>
<feature type="binding site" evidence="1">
    <location>
        <position position="76"/>
    </location>
    <ligand>
        <name>S-adenosyl-L-methionine</name>
        <dbReference type="ChEBI" id="CHEBI:59789"/>
    </ligand>
</feature>
<feature type="binding site" evidence="1">
    <location>
        <position position="120"/>
    </location>
    <ligand>
        <name>S-adenosyl-L-methionine</name>
        <dbReference type="ChEBI" id="CHEBI:59789"/>
    </ligand>
</feature>
<gene>
    <name evidence="1" type="primary">ubiG</name>
    <name type="ordered locus">PSPA7_1958</name>
</gene>
<accession>A6V2Q4</accession>